<proteinExistence type="inferred from homology"/>
<protein>
    <recommendedName>
        <fullName evidence="1">Chromosomal replication initiator protein DnaA</fullName>
    </recommendedName>
</protein>
<name>DNAA_AROAE</name>
<sequence>MSQDLWSFCLSRLEHELPPQQFNTWIKTLQADEEKAGASVALRLVAPSRFVLQWVRERYLRRIGELGAEFHGAPIEIELVLPAAGAARPAARPVIGSGPVAGPAPAPTPSQAPAATAAAPAVVTRPAEPESSIVTASDLAYEKTRLNADFTFDTLVTGRANDLARAAAMQVAQNPGTSYNPLFVYGGVGLGKTHLVHAIGNAVYRHNPRAVIRYVHVEDYYADVVRAYQQKSFDAFKRYYRSLDLLLIDDIQFFNNKNRTQEEFFHAFNALTEARKQIVITCDTYPKDIQGLEDRLISRFDWGLTVQIEPPELEMRVAILQKKAEALRVDLHDDVAFLIAKNLRSNVRELEGALNKVVAFARFHGRGITLEVAKDALKDLLNAHNRQLTIEHIQKTVADYYKIKVADMHSKKRTRVIARPRQVAMWLAKDLTPMSLPAIGEAFGGRDHTTVMHACRTIAELRLGDHQLNHDVHVLTQVLRG</sequence>
<accession>Q5P4P0</accession>
<evidence type="ECO:0000255" key="1">
    <source>
        <dbReference type="HAMAP-Rule" id="MF_00377"/>
    </source>
</evidence>
<evidence type="ECO:0000256" key="2">
    <source>
        <dbReference type="SAM" id="MobiDB-lite"/>
    </source>
</evidence>
<organism>
    <name type="scientific">Aromatoleum aromaticum (strain DSM 19018 / LMG 30748 / EbN1)</name>
    <name type="common">Azoarcus sp. (strain EbN1)</name>
    <dbReference type="NCBI Taxonomy" id="76114"/>
    <lineage>
        <taxon>Bacteria</taxon>
        <taxon>Pseudomonadati</taxon>
        <taxon>Pseudomonadota</taxon>
        <taxon>Betaproteobacteria</taxon>
        <taxon>Rhodocyclales</taxon>
        <taxon>Rhodocyclaceae</taxon>
        <taxon>Aromatoleum</taxon>
    </lineage>
</organism>
<dbReference type="EMBL" id="CR555306">
    <property type="protein sequence ID" value="CAI07722.1"/>
    <property type="molecule type" value="Genomic_DNA"/>
</dbReference>
<dbReference type="RefSeq" id="WP_011237436.1">
    <property type="nucleotide sequence ID" value="NC_006513.1"/>
</dbReference>
<dbReference type="SMR" id="Q5P4P0"/>
<dbReference type="STRING" id="76114.ebA2846"/>
<dbReference type="KEGG" id="eba:ebA2846"/>
<dbReference type="eggNOG" id="COG0593">
    <property type="taxonomic scope" value="Bacteria"/>
</dbReference>
<dbReference type="HOGENOM" id="CLU_026910_0_1_4"/>
<dbReference type="OrthoDB" id="9807019at2"/>
<dbReference type="Proteomes" id="UP000006552">
    <property type="component" value="Chromosome"/>
</dbReference>
<dbReference type="GO" id="GO:0005737">
    <property type="term" value="C:cytoplasm"/>
    <property type="evidence" value="ECO:0007669"/>
    <property type="project" value="UniProtKB-SubCell"/>
</dbReference>
<dbReference type="GO" id="GO:0005886">
    <property type="term" value="C:plasma membrane"/>
    <property type="evidence" value="ECO:0007669"/>
    <property type="project" value="TreeGrafter"/>
</dbReference>
<dbReference type="GO" id="GO:0005524">
    <property type="term" value="F:ATP binding"/>
    <property type="evidence" value="ECO:0007669"/>
    <property type="project" value="UniProtKB-UniRule"/>
</dbReference>
<dbReference type="GO" id="GO:0016887">
    <property type="term" value="F:ATP hydrolysis activity"/>
    <property type="evidence" value="ECO:0007669"/>
    <property type="project" value="InterPro"/>
</dbReference>
<dbReference type="GO" id="GO:0003688">
    <property type="term" value="F:DNA replication origin binding"/>
    <property type="evidence" value="ECO:0007669"/>
    <property type="project" value="UniProtKB-UniRule"/>
</dbReference>
<dbReference type="GO" id="GO:0008289">
    <property type="term" value="F:lipid binding"/>
    <property type="evidence" value="ECO:0007669"/>
    <property type="project" value="UniProtKB-KW"/>
</dbReference>
<dbReference type="GO" id="GO:0006270">
    <property type="term" value="P:DNA replication initiation"/>
    <property type="evidence" value="ECO:0007669"/>
    <property type="project" value="UniProtKB-UniRule"/>
</dbReference>
<dbReference type="GO" id="GO:0006275">
    <property type="term" value="P:regulation of DNA replication"/>
    <property type="evidence" value="ECO:0007669"/>
    <property type="project" value="UniProtKB-UniRule"/>
</dbReference>
<dbReference type="CDD" id="cd00009">
    <property type="entry name" value="AAA"/>
    <property type="match status" value="1"/>
</dbReference>
<dbReference type="CDD" id="cd06571">
    <property type="entry name" value="Bac_DnaA_C"/>
    <property type="match status" value="1"/>
</dbReference>
<dbReference type="FunFam" id="1.10.8.60:FF:000003">
    <property type="entry name" value="Chromosomal replication initiator protein DnaA"/>
    <property type="match status" value="1"/>
</dbReference>
<dbReference type="FunFam" id="3.40.50.300:FF:000668">
    <property type="entry name" value="Chromosomal replication initiator protein DnaA"/>
    <property type="match status" value="1"/>
</dbReference>
<dbReference type="Gene3D" id="1.10.1750.10">
    <property type="match status" value="1"/>
</dbReference>
<dbReference type="Gene3D" id="1.10.8.60">
    <property type="match status" value="1"/>
</dbReference>
<dbReference type="Gene3D" id="3.30.300.180">
    <property type="match status" value="1"/>
</dbReference>
<dbReference type="Gene3D" id="3.40.50.300">
    <property type="entry name" value="P-loop containing nucleotide triphosphate hydrolases"/>
    <property type="match status" value="1"/>
</dbReference>
<dbReference type="HAMAP" id="MF_00377">
    <property type="entry name" value="DnaA_bact"/>
    <property type="match status" value="1"/>
</dbReference>
<dbReference type="InterPro" id="IPR003593">
    <property type="entry name" value="AAA+_ATPase"/>
</dbReference>
<dbReference type="InterPro" id="IPR001957">
    <property type="entry name" value="Chromosome_initiator_DnaA"/>
</dbReference>
<dbReference type="InterPro" id="IPR020591">
    <property type="entry name" value="Chromosome_initiator_DnaA-like"/>
</dbReference>
<dbReference type="InterPro" id="IPR018312">
    <property type="entry name" value="Chromosome_initiator_DnaA_CS"/>
</dbReference>
<dbReference type="InterPro" id="IPR013159">
    <property type="entry name" value="DnaA_C"/>
</dbReference>
<dbReference type="InterPro" id="IPR013317">
    <property type="entry name" value="DnaA_dom"/>
</dbReference>
<dbReference type="InterPro" id="IPR024633">
    <property type="entry name" value="DnaA_N_dom"/>
</dbReference>
<dbReference type="InterPro" id="IPR038454">
    <property type="entry name" value="DnaA_N_sf"/>
</dbReference>
<dbReference type="InterPro" id="IPR027417">
    <property type="entry name" value="P-loop_NTPase"/>
</dbReference>
<dbReference type="InterPro" id="IPR010921">
    <property type="entry name" value="Trp_repressor/repl_initiator"/>
</dbReference>
<dbReference type="NCBIfam" id="TIGR00362">
    <property type="entry name" value="DnaA"/>
    <property type="match status" value="1"/>
</dbReference>
<dbReference type="PANTHER" id="PTHR30050">
    <property type="entry name" value="CHROMOSOMAL REPLICATION INITIATOR PROTEIN DNAA"/>
    <property type="match status" value="1"/>
</dbReference>
<dbReference type="PANTHER" id="PTHR30050:SF2">
    <property type="entry name" value="CHROMOSOMAL REPLICATION INITIATOR PROTEIN DNAA"/>
    <property type="match status" value="1"/>
</dbReference>
<dbReference type="Pfam" id="PF00308">
    <property type="entry name" value="Bac_DnaA"/>
    <property type="match status" value="1"/>
</dbReference>
<dbReference type="Pfam" id="PF08299">
    <property type="entry name" value="Bac_DnaA_C"/>
    <property type="match status" value="1"/>
</dbReference>
<dbReference type="Pfam" id="PF11638">
    <property type="entry name" value="DnaA_N"/>
    <property type="match status" value="1"/>
</dbReference>
<dbReference type="PRINTS" id="PR00051">
    <property type="entry name" value="DNAA"/>
</dbReference>
<dbReference type="SMART" id="SM00382">
    <property type="entry name" value="AAA"/>
    <property type="match status" value="1"/>
</dbReference>
<dbReference type="SMART" id="SM00760">
    <property type="entry name" value="Bac_DnaA_C"/>
    <property type="match status" value="1"/>
</dbReference>
<dbReference type="SUPFAM" id="SSF52540">
    <property type="entry name" value="P-loop containing nucleoside triphosphate hydrolases"/>
    <property type="match status" value="1"/>
</dbReference>
<dbReference type="SUPFAM" id="SSF48295">
    <property type="entry name" value="TrpR-like"/>
    <property type="match status" value="1"/>
</dbReference>
<dbReference type="PROSITE" id="PS01008">
    <property type="entry name" value="DNAA"/>
    <property type="match status" value="1"/>
</dbReference>
<keyword id="KW-0067">ATP-binding</keyword>
<keyword id="KW-0963">Cytoplasm</keyword>
<keyword id="KW-0235">DNA replication</keyword>
<keyword id="KW-0238">DNA-binding</keyword>
<keyword id="KW-0446">Lipid-binding</keyword>
<keyword id="KW-0547">Nucleotide-binding</keyword>
<keyword id="KW-1185">Reference proteome</keyword>
<reference key="1">
    <citation type="journal article" date="2005" name="Arch. Microbiol.">
        <title>The genome sequence of an anaerobic aromatic-degrading denitrifying bacterium, strain EbN1.</title>
        <authorList>
            <person name="Rabus R."/>
            <person name="Kube M."/>
            <person name="Heider J."/>
            <person name="Beck A."/>
            <person name="Heitmann K."/>
            <person name="Widdel F."/>
            <person name="Reinhardt R."/>
        </authorList>
    </citation>
    <scope>NUCLEOTIDE SEQUENCE [LARGE SCALE GENOMIC DNA]</scope>
    <source>
        <strain>DSM 19018 / LMG 30748 / EbN1</strain>
    </source>
</reference>
<comment type="function">
    <text evidence="1">Plays an essential role in the initiation and regulation of chromosomal replication. ATP-DnaA binds to the origin of replication (oriC) to initiate formation of the DNA replication initiation complex once per cell cycle. Binds the DnaA box (a 9 base pair repeat at the origin) and separates the double-stranded (ds)DNA. Forms a right-handed helical filament on oriC DNA; dsDNA binds to the exterior of the filament while single-stranded (ss)DNA is stabiized in the filament's interior. The ATP-DnaA-oriC complex binds and stabilizes one strand of the AT-rich DNA unwinding element (DUE), permitting loading of DNA polymerase. After initiation quickly degrades to an ADP-DnaA complex that is not apt for DNA replication. Binds acidic phospholipids.</text>
</comment>
<comment type="subunit">
    <text evidence="1">Oligomerizes as a right-handed, spiral filament on DNA at oriC.</text>
</comment>
<comment type="subcellular location">
    <subcellularLocation>
        <location evidence="1">Cytoplasm</location>
    </subcellularLocation>
</comment>
<comment type="domain">
    <text evidence="1">Domain I is involved in oligomerization and binding regulators, domain II is flexibile and of varying length in different bacteria, domain III forms the AAA+ region, while domain IV binds dsDNA.</text>
</comment>
<comment type="similarity">
    <text evidence="1">Belongs to the DnaA family.</text>
</comment>
<feature type="chain" id="PRO_0000114123" description="Chromosomal replication initiator protein DnaA">
    <location>
        <begin position="1"/>
        <end position="481"/>
    </location>
</feature>
<feature type="region of interest" description="Domain I, interacts with DnaA modulators" evidence="1">
    <location>
        <begin position="1"/>
        <end position="74"/>
    </location>
</feature>
<feature type="region of interest" description="Domain II" evidence="1">
    <location>
        <begin position="74"/>
        <end position="144"/>
    </location>
</feature>
<feature type="region of interest" description="Disordered" evidence="2">
    <location>
        <begin position="101"/>
        <end position="123"/>
    </location>
</feature>
<feature type="region of interest" description="Domain III, AAA+ region" evidence="1">
    <location>
        <begin position="145"/>
        <end position="361"/>
    </location>
</feature>
<feature type="region of interest" description="Domain IV, binds dsDNA" evidence="1">
    <location>
        <begin position="362"/>
        <end position="481"/>
    </location>
</feature>
<feature type="compositionally biased region" description="Low complexity" evidence="2">
    <location>
        <begin position="111"/>
        <end position="123"/>
    </location>
</feature>
<feature type="binding site" evidence="1">
    <location>
        <position position="189"/>
    </location>
    <ligand>
        <name>ATP</name>
        <dbReference type="ChEBI" id="CHEBI:30616"/>
    </ligand>
</feature>
<feature type="binding site" evidence="1">
    <location>
        <position position="191"/>
    </location>
    <ligand>
        <name>ATP</name>
        <dbReference type="ChEBI" id="CHEBI:30616"/>
    </ligand>
</feature>
<feature type="binding site" evidence="1">
    <location>
        <position position="192"/>
    </location>
    <ligand>
        <name>ATP</name>
        <dbReference type="ChEBI" id="CHEBI:30616"/>
    </ligand>
</feature>
<feature type="binding site" evidence="1">
    <location>
        <position position="193"/>
    </location>
    <ligand>
        <name>ATP</name>
        <dbReference type="ChEBI" id="CHEBI:30616"/>
    </ligand>
</feature>
<gene>
    <name evidence="1" type="primary">dnaA</name>
    <name type="ordered locus">AZOSEA15970</name>
    <name type="ORF">ebA2846</name>
</gene>